<evidence type="ECO:0000250" key="1">
    <source>
        <dbReference type="UniProtKB" id="P00590"/>
    </source>
</evidence>
<evidence type="ECO:0000250" key="2">
    <source>
        <dbReference type="UniProtKB" id="P11373"/>
    </source>
</evidence>
<evidence type="ECO:0000255" key="3"/>
<evidence type="ECO:0000269" key="4">
    <source>
    </source>
</evidence>
<evidence type="ECO:0000269" key="5">
    <source>
    </source>
</evidence>
<evidence type="ECO:0000303" key="6">
    <source>
    </source>
</evidence>
<evidence type="ECO:0000305" key="7"/>
<evidence type="ECO:0000305" key="8">
    <source>
    </source>
</evidence>
<protein>
    <recommendedName>
        <fullName>Cutinase</fullName>
        <ecNumber evidence="8">3.1.1.74</ecNumber>
    </recommendedName>
    <alternativeName>
        <fullName>Cutin hydrolase</fullName>
    </alternativeName>
</protein>
<reference key="1">
    <citation type="journal article" date="1997" name="Mol. Plant Microbe Interact.">
        <title>Cloning and expression of the cutinase A gene of Botrytis cinerea.</title>
        <authorList>
            <person name="van der Vlugt-Bergmans C.J.B."/>
            <person name="Wagemakers L.C.A.M."/>
            <person name="van Kan J.A.L."/>
        </authorList>
    </citation>
    <scope>NUCLEOTIDE SEQUENCE [GENOMIC DNA]</scope>
    <scope>INDUCTION</scope>
    <source>
        <strain>SAS56</strain>
    </source>
</reference>
<reference key="2">
    <citation type="journal article" date="1997" name="Mol. Plant Microbe Interact.">
        <title>Cutinase A of Botrytis cinerea is expressed, but not essential, during penetration of gerbera and tomato.</title>
        <authorList>
            <person name="van Kan J.A."/>
            <person name="van't Klooster J.W."/>
            <person name="Wagemakers C.A."/>
            <person name="Dees D.C."/>
            <person name="van der Vlugt-Bergmans C.J."/>
        </authorList>
    </citation>
    <scope>FUNCTION</scope>
    <scope>CATALYTIC ACTIVITY</scope>
    <scope>INDUCTION</scope>
    <scope>DISRUPTION PHENOTYPE</scope>
</reference>
<feature type="signal peptide" evidence="3">
    <location>
        <begin position="1"/>
        <end position="20"/>
    </location>
</feature>
<feature type="chain" id="PRO_0000006435" description="Cutinase">
    <location>
        <begin position="21"/>
        <end position="202"/>
    </location>
</feature>
<feature type="active site" description="Nucleophile" evidence="1">
    <location>
        <position position="117"/>
    </location>
</feature>
<feature type="active site" evidence="1">
    <location>
        <position position="169"/>
    </location>
</feature>
<feature type="active site" description="Proton donor/acceptor" evidence="1">
    <location>
        <position position="182"/>
    </location>
</feature>
<feature type="site" description="Transition state stabilizer" evidence="1">
    <location>
        <position position="118"/>
    </location>
</feature>
<feature type="disulfide bond" evidence="1">
    <location>
        <begin position="31"/>
        <end position="106"/>
    </location>
</feature>
<feature type="disulfide bond" evidence="1">
    <location>
        <begin position="165"/>
        <end position="172"/>
    </location>
</feature>
<organism>
    <name type="scientific">Botryotinia fuckeliana</name>
    <name type="common">Noble rot fungus</name>
    <name type="synonym">Botrytis cinerea</name>
    <dbReference type="NCBI Taxonomy" id="40559"/>
    <lineage>
        <taxon>Eukaryota</taxon>
        <taxon>Fungi</taxon>
        <taxon>Dikarya</taxon>
        <taxon>Ascomycota</taxon>
        <taxon>Pezizomycotina</taxon>
        <taxon>Leotiomycetes</taxon>
        <taxon>Helotiales</taxon>
        <taxon>Sclerotiniaceae</taxon>
        <taxon>Botrytis</taxon>
    </lineage>
</organism>
<keyword id="KW-1015">Disulfide bond</keyword>
<keyword id="KW-0378">Hydrolase</keyword>
<keyword id="KW-0964">Secreted</keyword>
<keyword id="KW-0719">Serine esterase</keyword>
<keyword id="KW-0732">Signal</keyword>
<keyword id="KW-0843">Virulence</keyword>
<gene>
    <name evidence="6" type="primary">cutA</name>
</gene>
<name>CUTI_BOTFU</name>
<sequence length="202" mass="20253">MKTSAQQLLSALLLPLSVLAAPTGSIEARACSDVTVIFARGTTETGTLGTVVGPPFLAALKSALGSSSVTMNGVDYPADVPGFLQGGDPAGSQTMATMVTSTLSSCPDTKLVISGYSQGGQLVHNAAKLLPAETTAKISSAVIFGDPDNGDPVQGVSADRTDIICHAGDNICQGGSLILLAHLTYGMDTTAAAAFVKKAAGL</sequence>
<proteinExistence type="evidence at protein level"/>
<comment type="function">
    <text evidence="1 5">Catalyzes the hydrolysis of complex carboxylic polyesters found in the cell wall of plants (PubMed:9002270). Degrades cutin, a macromolecule that forms the structure of the plant cuticle (PubMed:9002270). Allows pathogenic fungi to penetrate through the cuticular barrier into the host plant during the initial stage of fungal infection (By similarity).</text>
</comment>
<comment type="catalytic activity">
    <reaction evidence="8">
        <text>cutin + H2O = cutin monomers.</text>
        <dbReference type="EC" id="3.1.1.74"/>
    </reaction>
</comment>
<comment type="subcellular location">
    <subcellularLocation>
        <location evidence="2">Secreted</location>
    </subcellularLocation>
</comment>
<comment type="induction">
    <text evidence="4 5">Induced during infection (PubMed:9002269, PubMed:9002270). By contact with cutin (PubMed:9002269, PubMed:9002270). Repressed by glucose (PubMed:9002269, PubMed:9002270).</text>
</comment>
<comment type="PTM">
    <text evidence="2">The 2 disulfide bonds play a critical role in holding the catalytic residues in juxta-position; reduction of the disulfide bridges results in the complete inactivation of the enzyme.</text>
</comment>
<comment type="disruption phenotype">
    <text evidence="5">Decreases cellular carboxylic ester hydrolase activity (PubMed:9002270). Does not affect penetration of the cuticle of gerbera flowers or tomato fruit (PubMed:9002270).</text>
</comment>
<comment type="similarity">
    <text evidence="7">Belongs to the cutinase family.</text>
</comment>
<dbReference type="EC" id="3.1.1.74" evidence="8"/>
<dbReference type="EMBL" id="Z69264">
    <property type="protein sequence ID" value="CAA93255.1"/>
    <property type="molecule type" value="Genomic_DNA"/>
</dbReference>
<dbReference type="SMR" id="Q00298"/>
<dbReference type="ESTHER" id="botci-cutas">
    <property type="family name" value="Cutinase"/>
</dbReference>
<dbReference type="ABCD" id="Q00298">
    <property type="antibodies" value="1 sequenced antibody"/>
</dbReference>
<dbReference type="OMA" id="YPAGSNF"/>
<dbReference type="BRENDA" id="3.1.1.74">
    <property type="organism ID" value="918"/>
</dbReference>
<dbReference type="PHI-base" id="PHI:69"/>
<dbReference type="GO" id="GO:0005576">
    <property type="term" value="C:extracellular region"/>
    <property type="evidence" value="ECO:0007669"/>
    <property type="project" value="UniProtKB-SubCell"/>
</dbReference>
<dbReference type="GO" id="GO:0050525">
    <property type="term" value="F:cutinase activity"/>
    <property type="evidence" value="ECO:0000315"/>
    <property type="project" value="UniProtKB"/>
</dbReference>
<dbReference type="GO" id="GO:0016052">
    <property type="term" value="P:carbohydrate catabolic process"/>
    <property type="evidence" value="ECO:0007669"/>
    <property type="project" value="TreeGrafter"/>
</dbReference>
<dbReference type="FunFam" id="3.40.50.1820:FF:000244">
    <property type="entry name" value="Cutinase"/>
    <property type="match status" value="1"/>
</dbReference>
<dbReference type="Gene3D" id="3.40.50.1820">
    <property type="entry name" value="alpha/beta hydrolase"/>
    <property type="match status" value="1"/>
</dbReference>
<dbReference type="InterPro" id="IPR029058">
    <property type="entry name" value="AB_hydrolase_fold"/>
</dbReference>
<dbReference type="InterPro" id="IPR000675">
    <property type="entry name" value="Cutinase/axe"/>
</dbReference>
<dbReference type="InterPro" id="IPR043580">
    <property type="entry name" value="CUTINASE_1"/>
</dbReference>
<dbReference type="InterPro" id="IPR043579">
    <property type="entry name" value="CUTINASE_2"/>
</dbReference>
<dbReference type="InterPro" id="IPR011150">
    <property type="entry name" value="Cutinase_monf"/>
</dbReference>
<dbReference type="PANTHER" id="PTHR48250:SF1">
    <property type="entry name" value="CUTINASE"/>
    <property type="match status" value="1"/>
</dbReference>
<dbReference type="PANTHER" id="PTHR48250">
    <property type="entry name" value="CUTINASE 2-RELATED"/>
    <property type="match status" value="1"/>
</dbReference>
<dbReference type="Pfam" id="PF01083">
    <property type="entry name" value="Cutinase"/>
    <property type="match status" value="1"/>
</dbReference>
<dbReference type="PRINTS" id="PR00129">
    <property type="entry name" value="CUTINASE"/>
</dbReference>
<dbReference type="SMART" id="SM01110">
    <property type="entry name" value="Cutinase"/>
    <property type="match status" value="1"/>
</dbReference>
<dbReference type="SUPFAM" id="SSF53474">
    <property type="entry name" value="alpha/beta-Hydrolases"/>
    <property type="match status" value="1"/>
</dbReference>
<dbReference type="PROSITE" id="PS00155">
    <property type="entry name" value="CUTINASE_1"/>
    <property type="match status" value="1"/>
</dbReference>
<dbReference type="PROSITE" id="PS00931">
    <property type="entry name" value="CUTINASE_2"/>
    <property type="match status" value="1"/>
</dbReference>
<accession>Q00298</accession>